<gene>
    <name evidence="2" type="primary">rpsL</name>
    <name type="ordered locus">BURPS668_3751</name>
</gene>
<dbReference type="EMBL" id="CP000570">
    <property type="protein sequence ID" value="ABN82364.1"/>
    <property type="molecule type" value="Genomic_DNA"/>
</dbReference>
<dbReference type="RefSeq" id="WP_004521903.1">
    <property type="nucleotide sequence ID" value="NC_009074.1"/>
</dbReference>
<dbReference type="SMR" id="A3NEI4"/>
<dbReference type="GeneID" id="93061837"/>
<dbReference type="KEGG" id="bpd:BURPS668_3751"/>
<dbReference type="HOGENOM" id="CLU_104295_1_2_4"/>
<dbReference type="GO" id="GO:0015935">
    <property type="term" value="C:small ribosomal subunit"/>
    <property type="evidence" value="ECO:0007669"/>
    <property type="project" value="InterPro"/>
</dbReference>
<dbReference type="GO" id="GO:0019843">
    <property type="term" value="F:rRNA binding"/>
    <property type="evidence" value="ECO:0007669"/>
    <property type="project" value="UniProtKB-UniRule"/>
</dbReference>
<dbReference type="GO" id="GO:0003735">
    <property type="term" value="F:structural constituent of ribosome"/>
    <property type="evidence" value="ECO:0007669"/>
    <property type="project" value="InterPro"/>
</dbReference>
<dbReference type="GO" id="GO:0000049">
    <property type="term" value="F:tRNA binding"/>
    <property type="evidence" value="ECO:0007669"/>
    <property type="project" value="UniProtKB-UniRule"/>
</dbReference>
<dbReference type="GO" id="GO:0006412">
    <property type="term" value="P:translation"/>
    <property type="evidence" value="ECO:0007669"/>
    <property type="project" value="UniProtKB-UniRule"/>
</dbReference>
<dbReference type="CDD" id="cd03368">
    <property type="entry name" value="Ribosomal_S12"/>
    <property type="match status" value="1"/>
</dbReference>
<dbReference type="FunFam" id="2.40.50.140:FF:000001">
    <property type="entry name" value="30S ribosomal protein S12"/>
    <property type="match status" value="1"/>
</dbReference>
<dbReference type="Gene3D" id="2.40.50.140">
    <property type="entry name" value="Nucleic acid-binding proteins"/>
    <property type="match status" value="1"/>
</dbReference>
<dbReference type="HAMAP" id="MF_00403_B">
    <property type="entry name" value="Ribosomal_uS12_B"/>
    <property type="match status" value="1"/>
</dbReference>
<dbReference type="InterPro" id="IPR012340">
    <property type="entry name" value="NA-bd_OB-fold"/>
</dbReference>
<dbReference type="InterPro" id="IPR006032">
    <property type="entry name" value="Ribosomal_uS12"/>
</dbReference>
<dbReference type="InterPro" id="IPR005679">
    <property type="entry name" value="Ribosomal_uS12_bac"/>
</dbReference>
<dbReference type="NCBIfam" id="TIGR00981">
    <property type="entry name" value="rpsL_bact"/>
    <property type="match status" value="1"/>
</dbReference>
<dbReference type="PANTHER" id="PTHR11652">
    <property type="entry name" value="30S RIBOSOMAL PROTEIN S12 FAMILY MEMBER"/>
    <property type="match status" value="1"/>
</dbReference>
<dbReference type="Pfam" id="PF00164">
    <property type="entry name" value="Ribosom_S12_S23"/>
    <property type="match status" value="1"/>
</dbReference>
<dbReference type="PIRSF" id="PIRSF002133">
    <property type="entry name" value="Ribosomal_S12/S23"/>
    <property type="match status" value="1"/>
</dbReference>
<dbReference type="PRINTS" id="PR01034">
    <property type="entry name" value="RIBOSOMALS12"/>
</dbReference>
<dbReference type="SUPFAM" id="SSF50249">
    <property type="entry name" value="Nucleic acid-binding proteins"/>
    <property type="match status" value="1"/>
</dbReference>
<dbReference type="PROSITE" id="PS00055">
    <property type="entry name" value="RIBOSOMAL_S12"/>
    <property type="match status" value="1"/>
</dbReference>
<keyword id="KW-0488">Methylation</keyword>
<keyword id="KW-0687">Ribonucleoprotein</keyword>
<keyword id="KW-0689">Ribosomal protein</keyword>
<keyword id="KW-0694">RNA-binding</keyword>
<keyword id="KW-0699">rRNA-binding</keyword>
<keyword id="KW-0820">tRNA-binding</keyword>
<reference key="1">
    <citation type="journal article" date="2010" name="Genome Biol. Evol.">
        <title>Continuing evolution of Burkholderia mallei through genome reduction and large-scale rearrangements.</title>
        <authorList>
            <person name="Losada L."/>
            <person name="Ronning C.M."/>
            <person name="DeShazer D."/>
            <person name="Woods D."/>
            <person name="Fedorova N."/>
            <person name="Kim H.S."/>
            <person name="Shabalina S.A."/>
            <person name="Pearson T.R."/>
            <person name="Brinkac L."/>
            <person name="Tan P."/>
            <person name="Nandi T."/>
            <person name="Crabtree J."/>
            <person name="Badger J."/>
            <person name="Beckstrom-Sternberg S."/>
            <person name="Saqib M."/>
            <person name="Schutzer S.E."/>
            <person name="Keim P."/>
            <person name="Nierman W.C."/>
        </authorList>
    </citation>
    <scope>NUCLEOTIDE SEQUENCE [LARGE SCALE GENOMIC DNA]</scope>
    <source>
        <strain>668</strain>
    </source>
</reference>
<organism>
    <name type="scientific">Burkholderia pseudomallei (strain 668)</name>
    <dbReference type="NCBI Taxonomy" id="320373"/>
    <lineage>
        <taxon>Bacteria</taxon>
        <taxon>Pseudomonadati</taxon>
        <taxon>Pseudomonadota</taxon>
        <taxon>Betaproteobacteria</taxon>
        <taxon>Burkholderiales</taxon>
        <taxon>Burkholderiaceae</taxon>
        <taxon>Burkholderia</taxon>
        <taxon>pseudomallei group</taxon>
    </lineage>
</organism>
<accession>A3NEI4</accession>
<sequence>MPTINQLVRKGRASETTKSKSPALQDCPQRRGVCTRVYTTTPKKPNSALRKVAKVRLTNGFEVISYIGGEGHNLQEHSVVLIRGGRVKDLPGVRYHMVRGSLDTQGVKDRKQARSKYGAKRAKAAK</sequence>
<name>RS12_BURP6</name>
<feature type="chain" id="PRO_1000049775" description="Small ribosomal subunit protein uS12">
    <location>
        <begin position="1"/>
        <end position="126"/>
    </location>
</feature>
<feature type="region of interest" description="Disordered" evidence="3">
    <location>
        <begin position="1"/>
        <end position="26"/>
    </location>
</feature>
<feature type="region of interest" description="Disordered" evidence="3">
    <location>
        <begin position="101"/>
        <end position="126"/>
    </location>
</feature>
<feature type="compositionally biased region" description="Basic residues" evidence="3">
    <location>
        <begin position="113"/>
        <end position="126"/>
    </location>
</feature>
<feature type="modified residue" description="3-methylthioaspartic acid" evidence="1">
    <location>
        <position position="89"/>
    </location>
</feature>
<comment type="function">
    <text evidence="2">With S4 and S5 plays an important role in translational accuracy.</text>
</comment>
<comment type="function">
    <text evidence="2">Interacts with and stabilizes bases of the 16S rRNA that are involved in tRNA selection in the A site and with the mRNA backbone. Located at the interface of the 30S and 50S subunits, it traverses the body of the 30S subunit contacting proteins on the other side and probably holding the rRNA structure together. The combined cluster of proteins S8, S12 and S17 appears to hold together the shoulder and platform of the 30S subunit.</text>
</comment>
<comment type="subunit">
    <text evidence="2">Part of the 30S ribosomal subunit. Contacts proteins S8 and S17. May interact with IF1 in the 30S initiation complex.</text>
</comment>
<comment type="similarity">
    <text evidence="2">Belongs to the universal ribosomal protein uS12 family.</text>
</comment>
<proteinExistence type="inferred from homology"/>
<protein>
    <recommendedName>
        <fullName evidence="2">Small ribosomal subunit protein uS12</fullName>
    </recommendedName>
    <alternativeName>
        <fullName evidence="4">30S ribosomal protein S12</fullName>
    </alternativeName>
</protein>
<evidence type="ECO:0000250" key="1"/>
<evidence type="ECO:0000255" key="2">
    <source>
        <dbReference type="HAMAP-Rule" id="MF_00403"/>
    </source>
</evidence>
<evidence type="ECO:0000256" key="3">
    <source>
        <dbReference type="SAM" id="MobiDB-lite"/>
    </source>
</evidence>
<evidence type="ECO:0000305" key="4"/>